<proteinExistence type="evidence at protein level"/>
<name>ADCY5_CANLF</name>
<comment type="function">
    <molecule>Isoform 1</molecule>
    <text evidence="2 9 10 11 12 13 14 15 16 18">Catalyzes the formation of the signaling molecule cAMP in response to G-protein signaling (PubMed:10427002, PubMed:11087399, PubMed:15591060, PubMed:1618857, PubMed:16766715, PubMed:19243146, PubMed:8119955, PubMed:8428899, PubMed:9748257). Mediates signaling downstream of ADRB1. Regulates the increase of free cytosolic Ca(2+) in response to increased blood glucose levels and contributes to the regulation of Ca(2+)-dependent insulin secretion (By similarity).</text>
</comment>
<comment type="function">
    <molecule>Isoform 2</molecule>
    <text evidence="16">Lacks catalytic activity by itself, but can associate with isoform 1 to form active adenylyl cyclase.</text>
</comment>
<comment type="catalytic activity">
    <reaction evidence="9 10 11 12 13 14 15 16 18">
        <text>ATP = 3',5'-cyclic AMP + diphosphate</text>
        <dbReference type="Rhea" id="RHEA:15389"/>
        <dbReference type="ChEBI" id="CHEBI:30616"/>
        <dbReference type="ChEBI" id="CHEBI:33019"/>
        <dbReference type="ChEBI" id="CHEBI:58165"/>
        <dbReference type="EC" id="4.6.1.1"/>
    </reaction>
</comment>
<comment type="cofactor">
    <cofactor evidence="10 13 14">
        <name>Mg(2+)</name>
        <dbReference type="ChEBI" id="CHEBI:18420"/>
    </cofactor>
    <cofactor evidence="10 13">
        <name>Mn(2+)</name>
        <dbReference type="ChEBI" id="CHEBI:29035"/>
    </cofactor>
    <text evidence="9 10 13 24">Binds 2 magnesium ions per subunit (PubMed:16766715, PubMed:19243146). Is also active with manganese (in vitro) (PubMed:11087399, PubMed:16766715).</text>
</comment>
<comment type="activity regulation">
    <text evidence="2 12 15 16 18">Activated by G(s) G alpha protein GNAS (By similarity). Inhibited by G(i) G alpha protein GNAI1 (PubMed:8119955, PubMed:9748257). Activity is further increased by interaction with the G-protein beta and gamma subunit complex formed by GNB1 and GNG2 (By similarity). Activated by forskolin (PubMed:1618857, PubMed:8428899). Is not activated by calmodulin. Inhibited by adenosine and ATP analogs (By similarity). Inhibited by calcium ions, already at micromolar concentrations (PubMed:1618857). Phosphorylation by RAF1 results in its activation (By similarity).</text>
</comment>
<comment type="subunit">
    <text evidence="2 4 9 10 11 13 14 17">Interacts with GNAS (PubMed:10427002, PubMed:11087399, PubMed:15591060, PubMed:16766715, PubMed:19243146, PubMed:9417641). Interacts with GNB1 and GNG2 (By similarity). Part of a complex containing AKAP5, ADCY6, PDE4C and PKD2 (By similarity). Interacts with RAF1 (By similarity).</text>
</comment>
<comment type="subcellular location">
    <subcellularLocation>
        <location evidence="12 16">Cell membrane</location>
        <topology evidence="20">Multi-pass membrane protein</topology>
    </subcellularLocation>
    <subcellularLocation>
        <location evidence="4">Cell projection</location>
        <location evidence="4">Cilium</location>
    </subcellularLocation>
</comment>
<comment type="alternative products">
    <event type="alternative splicing"/>
    <isoform>
        <id>P30803-1</id>
        <name>1</name>
        <name>V</name>
        <sequence type="displayed"/>
    </isoform>
    <isoform>
        <id>P30803-2</id>
        <name>2</name>
        <name>V-alpha</name>
        <sequence type="described" ref="VSP_000242 VSP_000243"/>
    </isoform>
</comment>
<comment type="tissue specificity">
    <text evidence="12 16">Isoform 1 is detected in heart, and at lower levels in brain (PubMed:1618857). Isoform 2 is detected in heart (PubMed:8428899).</text>
</comment>
<comment type="domain">
    <text evidence="9 10 11 13 14">The protein contains two modules with six transmembrane helices each; both are required for catalytic activity. Isolated N-terminal or C-terminal guanylate cyclase domains have no catalytic activity, but when they are brought together, enzyme activity is restored. The active site is at the interface of the two domains. Both contribute substrate-binding residues, but the catalytic metal ions are bound exclusively via the N-terminal guanylate cyclase domain.</text>
</comment>
<comment type="similarity">
    <text evidence="7">Belongs to the adenylyl cyclase class-4/guanylyl cyclase family.</text>
</comment>
<keyword id="KW-0002">3D-structure</keyword>
<keyword id="KW-0025">Alternative splicing</keyword>
<keyword id="KW-0067">ATP-binding</keyword>
<keyword id="KW-0115">cAMP biosynthesis</keyword>
<keyword id="KW-1003">Cell membrane</keyword>
<keyword id="KW-0966">Cell projection</keyword>
<keyword id="KW-0969">Cilium</keyword>
<keyword id="KW-0325">Glycoprotein</keyword>
<keyword id="KW-0456">Lyase</keyword>
<keyword id="KW-0460">Magnesium</keyword>
<keyword id="KW-0472">Membrane</keyword>
<keyword id="KW-0479">Metal-binding</keyword>
<keyword id="KW-0488">Methylation</keyword>
<keyword id="KW-0547">Nucleotide-binding</keyword>
<keyword id="KW-0597">Phosphoprotein</keyword>
<keyword id="KW-1185">Reference proteome</keyword>
<keyword id="KW-0677">Repeat</keyword>
<keyword id="KW-0812">Transmembrane</keyword>
<keyword id="KW-1133">Transmembrane helix</keyword>
<sequence length="1265" mass="140319">MSGPRSASPPGCAATRGGPEHRAAWGEAEARANGHPHAAGGATRGCSKKPGGAVTPQLQQQQQQQQHEQQHEQQQHEQQQHVQQQQRLAKRWRGDDDPPLGGDDPLAGGFGFSFRSRSAWQERGGDDCGRGSRRRRRGAAGGGSSRAPPAGGGGGPAAAGGAEVRPRSVELGLDERRGRGRAEPEPEAEAGAPGGDRGARDGDGPAGPGACCRALLQIFRSKKFPSDKLERLYQRYFFRLNQSSLTMLMAVLVLVCLVMLAFHAARPPLRLPHLAVLAAAVGVILVMAVLCNRAAFHQDHMGLACYALIAVVLAVQVVGLLLPQPRSASEGIWWTVFFIYTIYTLLPVRMRAAVLSGVLLSALHLAIALRANAQDRFLLKQLVSNVLIFSCTNIVGVCTHYPAEVSQRQAFQETRECIQARLHSQRENQQQERLLLSVLPRHVAMEMKADINAKQEDMMFHKIYIQKHDNVSILFADIEGFTSLASQCTAQELVMTLNELFARFDKLAAENHCLRIKILGDCYYCVSGLPEARADHAHCCVEMGMDMIEAISLVREVTGVNVNMRVGIHSGRVHCGVLGLRKWQFDVWSNDVTLANHMEAGGKAGRIHITKATLSYLNGDYEVEPGCGGERNAYLKEHSIETFLILRCTQKRKEEKAMIAKMNRQRTNSIGHNPPHWGAERPFYNHLGGNQVSKEMKRMGFEDPKDKNAQESANPEDEVDEFLGRAIDARSIDRLRSEHVRKFLLTFREPDLEKKYSKQVDDRFGAYVACASLVFLFICFVQITIVPHSVFMLSFYLTCFLLLTLVVFVSVIYSCVKLFPGPLQSLSRKIVRSKTNSTLVGVFTITLVFLSAFVNMFMCNSEDLLGCLADEHNISTSRVNACHVAASAANLSLGDEQGFCGTPWPSCNFPEYFTYSVLLSLLACSVFLQISCIGKLVLMLAIELIYVLVVEVPRVTLFDNADLLVTANAIDFNNNNGTSQCPEHATKVALKVVTPIIISVFVLALYLHAQQVESTARLDFLWKLQATEEKEEMEELQAYNRRLLHNILPKDVAAHFLARERRNDELYYQSCECVAVMFASIANFSEFYVELEANNEGVECLRVLNEIIADFDEIISEDRFRQLEKIKTIGSTYMAASGLNDSTYDKVGKTHIKALADFAMKLMDQMKYINEHSFNNFQMKIGLNIGPVVAGVIGARKPQYDIWGNTVNVASRMDSTGVPDRIQVTTDMYQVLAANTYQLECRGVVKVKGKGEMMTYFLNGGPPLS</sequence>
<gene>
    <name type="primary">ADCY5</name>
</gene>
<accession>P30803</accession>
<protein>
    <recommendedName>
        <fullName>Adenylate cyclase type 5</fullName>
        <ecNumber evidence="9 10 11 12 13 14 16">4.6.1.1</ecNumber>
    </recommendedName>
    <alternativeName>
        <fullName>ATP pyrophosphate-lyase 5</fullName>
    </alternativeName>
    <alternativeName>
        <fullName>Adenylate cyclase type V</fullName>
    </alternativeName>
    <alternativeName>
        <fullName>Adenylyl cyclase 5</fullName>
    </alternativeName>
    <alternativeName>
        <fullName>Ca(2+)-inhibitable adenylyl cyclase</fullName>
    </alternativeName>
</protein>
<reference key="1">
    <citation type="journal article" date="1992" name="J. Biol. Chem.">
        <title>Isolation and characterization of a novel cardiac adenylylcyclase cDNA.</title>
        <authorList>
            <person name="Ishikawa Y."/>
            <person name="Katsushika S."/>
            <person name="Chen L."/>
            <person name="Halnon N.J."/>
            <person name="Kawabe J."/>
            <person name="Homcy C.J."/>
        </authorList>
    </citation>
    <scope>NUCLEOTIDE SEQUENCE [MRNA]</scope>
    <scope>FUNCTION</scope>
    <scope>CATALYTIC ACTIVITY</scope>
    <scope>SUBCELLULAR LOCATION</scope>
    <scope>ACTIVITY REGULATION</scope>
    <scope>TISSUE SPECIFICITY</scope>
    <source>
        <tissue>Heart muscle</tissue>
    </source>
</reference>
<reference key="2">
    <citation type="journal article" date="1993" name="J. Biol. Chem.">
        <title>In vivo generation of an adenylylcyclase isoform with a half-molecule motif.</title>
        <authorList>
            <person name="Katsushika S."/>
            <person name="Kawabe J."/>
            <person name="Homcy C.J."/>
            <person name="Ishikawa Y."/>
        </authorList>
    </citation>
    <scope>NUCLEOTIDE SEQUENCE [MRNA] (ISOFORM 2)</scope>
    <scope>FUNCTION</scope>
    <scope>CATALYTIC ACTIVITY</scope>
    <scope>SUBCELLULAR LOCATION</scope>
    <scope>ACTIVITY REGULATION</scope>
    <scope>DOMAIN</scope>
    <scope>TISSUE SPECIFICITY</scope>
    <source>
        <tissue>Heart muscle</tissue>
    </source>
</reference>
<reference key="3">
    <citation type="submission" date="1998-08" db="EMBL/GenBank/DDBJ databases">
        <authorList>
            <person name="Tomlinson J."/>
            <person name="Okumura S."/>
            <person name="Ishikawa Y."/>
        </authorList>
    </citation>
    <scope>SEQUENCE REVISION TO N-TERMINUS</scope>
</reference>
<reference key="4">
    <citation type="journal article" date="1994" name="J. Biol. Chem.">
        <title>Distinct patterns of bidirectional regulation of mammalian adenylyl cyclases.</title>
        <authorList>
            <person name="Taussig R."/>
            <person name="Tang W.J."/>
            <person name="Hepler J.R."/>
            <person name="Gilman A.G."/>
        </authorList>
    </citation>
    <scope>FUNCTION</scope>
    <scope>CATALYTIC ACTIVITY</scope>
    <scope>ACTIVITY REGULATION</scope>
</reference>
<reference key="5">
    <citation type="journal article" date="1998" name="J. Biol. Chem.">
        <title>Identification of a Gialpha binding site on type V adenylyl cyclase.</title>
        <authorList>
            <person name="Dessauer C.W."/>
            <person name="Tesmer J.J."/>
            <person name="Sprang S.R."/>
            <person name="Gilman A.G."/>
        </authorList>
    </citation>
    <scope>FUNCTION</scope>
    <scope>CATALYTIC ACTIVITY</scope>
    <scope>ACTIVITY REGULATION</scope>
    <scope>MUTAGENESIS OF GLN-487; GLU-492; MET-495; THR-496 AND GLU-499</scope>
</reference>
<reference key="6">
    <citation type="journal article" date="1997" name="Science">
        <title>Crystal structure of the catalytic domains of adenylyl cyclase in a complex with Gsalpha.GTPgammaS.</title>
        <authorList>
            <person name="Tesmer J.J.G."/>
            <person name="Sunahara R.K."/>
            <person name="Gilman A.G."/>
            <person name="Sprang S.R."/>
        </authorList>
    </citation>
    <scope>X-RAY CRYSTALLOGRAPHY (2.3 ANGSTROMS) OF 445-661 OF CHIMERA WITH ADCY5 IN COMPLEX WITH GNAS</scope>
    <scope>INTERACTION WITH GNAS</scope>
    <scope>DOMAIN</scope>
</reference>
<reference key="7">
    <citation type="journal article" date="1999" name="Science">
        <title>Two-metal-ion catalysis in adenylyl cyclase.</title>
        <authorList>
            <person name="Tesmer J.J.G."/>
            <person name="Sunahara R.K."/>
            <person name="Johnson R.A."/>
            <person name="Gosselin G."/>
            <person name="Gilman A.G."/>
            <person name="Sprang S.R."/>
        </authorList>
    </citation>
    <scope>X-RAY CRYSTALLOGRAPHY (2.8 ANGSTROMS) OF 445-661 OF CHIMERA WITH ADCY5 IN COMPLEX WITH ATP ANALOGS; MAGNESIUM; MANGANESE AND GNAS</scope>
    <scope>INTERACTION WITH GNAS</scope>
    <scope>CATALYTIC ACTIVITY</scope>
    <scope>FUNCTION</scope>
    <scope>COFACTOR</scope>
    <scope>MUTAGENESIS OF ASP-477 AND ASP-521</scope>
    <scope>DOMAIN</scope>
</reference>
<reference evidence="27 28" key="8">
    <citation type="journal article" date="2000" name="Biochemistry">
        <title>Molecular basis for P-site inhibition of adenylyl cyclase.</title>
        <authorList>
            <person name="Tesmer J.J."/>
            <person name="Dessauer C.W."/>
            <person name="Sunahara R.K."/>
            <person name="Murray L.D."/>
            <person name="Johnson R.A."/>
            <person name="Gilman A.G."/>
            <person name="Sprang S.R."/>
        </authorList>
    </citation>
    <scope>X-RAY CRYSTALLOGRAPHY (2.40 ANGSTROMS) OF 445-661 OF CHIMERA WITH ADCY5 IN COMPLEX WITH GNAS; ATP ANALOG AND MAGNESIUM</scope>
    <scope>CATALYTIC ACTIVITY</scope>
    <scope>FUNCTION</scope>
    <scope>COFACTOR</scope>
    <scope>SUBCELLULAR LOCATION</scope>
    <scope>INTERACTION WITH GNAS</scope>
    <scope>DOMAIN</scope>
</reference>
<reference evidence="29 30" key="9">
    <citation type="journal article" date="2005" name="J. Biol. Chem.">
        <title>Structural basis for the inhibition of mammalian membrane adenylyl cyclase by 2 '(3')-O-(N-Methylanthraniloyl)-guanosine 5 '-triphosphate.</title>
        <authorList>
            <person name="Mou T.C."/>
            <person name="Gille A."/>
            <person name="Fancy D.A."/>
            <person name="Seifert R."/>
            <person name="Sprang S.R."/>
        </authorList>
    </citation>
    <scope>X-RAY CRYSTALLOGRAPHY (2.80 ANGSTROMS) OF 445-661 OF CHIMERA WITH ADCY5 IN COMPLEX WITH GNAS; MAGNESIUM AND MANGANESE</scope>
    <scope>FUNCTION</scope>
    <scope>CATALYTIC ACTIVITY</scope>
    <scope>INTERACTION WITH GNAS</scope>
    <scope>DOMAIN</scope>
</reference>
<reference evidence="31 32" key="10">
    <citation type="journal article" date="2006" name="Mol. Pharmacol.">
        <title>Broad specificity of mammalian adenylyl cyclase for interaction with 2',3'-substituted purine- and pyrimidine nucleotide inhibitors.</title>
        <authorList>
            <person name="Mou T.C."/>
            <person name="Gille A."/>
            <person name="Suryanarayana S."/>
            <person name="Richter M."/>
            <person name="Seifert R."/>
            <person name="Sprang S.R."/>
        </authorList>
    </citation>
    <scope>X-RAY CRYSTALLOGRAPHY (2.90 ANGSTROMS) OF 444-661 OF CHIMERA WITH ADCY5 IN COMPLEX WITH GNAS; MANGANESE AND ATP ANALOG</scope>
    <scope>FUNCTION</scope>
    <scope>CATALYTIC ACTIVITY</scope>
    <scope>COFACTOR</scope>
    <scope>INTERACTION WITH GNAS</scope>
    <scope>DOMAIN</scope>
</reference>
<reference evidence="33 34 35 36" key="11">
    <citation type="journal article" date="2009" name="Biochemistry">
        <title>Structural basis for inhibition of mammalian adenylyl cyclase by calcium.</title>
        <authorList>
            <person name="Mou T.C."/>
            <person name="Masada N."/>
            <person name="Cooper D.M."/>
            <person name="Sprang S.R."/>
        </authorList>
    </citation>
    <scope>X-RAY CRYSTALLOGRAPHY (2.68 ANGSTROMS) OF 444-661 OF CHIMERA WITH ADCY5 IN COMPLEX WITH GNAS; ATP AND MAGNESIUM</scope>
    <scope>FUNCTION</scope>
    <scope>CATALYTIC ACTIVITY</scope>
    <scope>COFACTOR</scope>
    <scope>INTERACTION WITH GNAS</scope>
    <scope>DOMAIN</scope>
</reference>
<evidence type="ECO:0000250" key="1">
    <source>
        <dbReference type="UniProtKB" id="O43306"/>
    </source>
</evidence>
<evidence type="ECO:0000250" key="2">
    <source>
        <dbReference type="UniProtKB" id="O95622"/>
    </source>
</evidence>
<evidence type="ECO:0000250" key="3">
    <source>
        <dbReference type="UniProtKB" id="P26769"/>
    </source>
</evidence>
<evidence type="ECO:0000250" key="4">
    <source>
        <dbReference type="UniProtKB" id="P84309"/>
    </source>
</evidence>
<evidence type="ECO:0000250" key="5">
    <source>
        <dbReference type="UniProtKB" id="Q03343"/>
    </source>
</evidence>
<evidence type="ECO:0000255" key="6"/>
<evidence type="ECO:0000255" key="7">
    <source>
        <dbReference type="PROSITE-ProRule" id="PRU00099"/>
    </source>
</evidence>
<evidence type="ECO:0000256" key="8">
    <source>
        <dbReference type="SAM" id="MobiDB-lite"/>
    </source>
</evidence>
<evidence type="ECO:0000269" key="9">
    <source>
    </source>
</evidence>
<evidence type="ECO:0000269" key="10">
    <source>
    </source>
</evidence>
<evidence type="ECO:0000269" key="11">
    <source>
    </source>
</evidence>
<evidence type="ECO:0000269" key="12">
    <source>
    </source>
</evidence>
<evidence type="ECO:0000269" key="13">
    <source>
    </source>
</evidence>
<evidence type="ECO:0000269" key="14">
    <source>
    </source>
</evidence>
<evidence type="ECO:0000269" key="15">
    <source>
    </source>
</evidence>
<evidence type="ECO:0000269" key="16">
    <source>
    </source>
</evidence>
<evidence type="ECO:0000269" key="17">
    <source>
    </source>
</evidence>
<evidence type="ECO:0000269" key="18">
    <source>
    </source>
</evidence>
<evidence type="ECO:0000303" key="19">
    <source>
    </source>
</evidence>
<evidence type="ECO:0000305" key="20"/>
<evidence type="ECO:0000305" key="21">
    <source>
    </source>
</evidence>
<evidence type="ECO:0000305" key="22">
    <source>
    </source>
</evidence>
<evidence type="ECO:0000305" key="23">
    <source>
    </source>
</evidence>
<evidence type="ECO:0000305" key="24">
    <source>
    </source>
</evidence>
<evidence type="ECO:0007744" key="25">
    <source>
        <dbReference type="PDB" id="1CJU"/>
    </source>
</evidence>
<evidence type="ECO:0007744" key="26">
    <source>
        <dbReference type="PDB" id="1CJV"/>
    </source>
</evidence>
<evidence type="ECO:0007744" key="27">
    <source>
        <dbReference type="PDB" id="1CS4"/>
    </source>
</evidence>
<evidence type="ECO:0007744" key="28">
    <source>
        <dbReference type="PDB" id="1CUL"/>
    </source>
</evidence>
<evidence type="ECO:0007744" key="29">
    <source>
        <dbReference type="PDB" id="1TL7"/>
    </source>
</evidence>
<evidence type="ECO:0007744" key="30">
    <source>
        <dbReference type="PDB" id="1U0H"/>
    </source>
</evidence>
<evidence type="ECO:0007744" key="31">
    <source>
        <dbReference type="PDB" id="2GVD"/>
    </source>
</evidence>
<evidence type="ECO:0007744" key="32">
    <source>
        <dbReference type="PDB" id="2GVZ"/>
    </source>
</evidence>
<evidence type="ECO:0007744" key="33">
    <source>
        <dbReference type="PDB" id="3C14"/>
    </source>
</evidence>
<evidence type="ECO:0007744" key="34">
    <source>
        <dbReference type="PDB" id="3C15"/>
    </source>
</evidence>
<evidence type="ECO:0007744" key="35">
    <source>
        <dbReference type="PDB" id="3C16"/>
    </source>
</evidence>
<evidence type="ECO:0007744" key="36">
    <source>
        <dbReference type="PDB" id="3MAA"/>
    </source>
</evidence>
<evidence type="ECO:0007829" key="37">
    <source>
        <dbReference type="PDB" id="1AZS"/>
    </source>
</evidence>
<evidence type="ECO:0007829" key="38">
    <source>
        <dbReference type="PDB" id="2GVZ"/>
    </source>
</evidence>
<feature type="chain" id="PRO_0000195693" description="Adenylate cyclase type 5">
    <location>
        <begin position="1"/>
        <end position="1265"/>
    </location>
</feature>
<feature type="topological domain" description="Cytoplasmic" evidence="6">
    <location>
        <begin position="1"/>
        <end position="244"/>
    </location>
</feature>
<feature type="transmembrane region" description="Helical" evidence="6">
    <location>
        <begin position="245"/>
        <end position="265"/>
    </location>
</feature>
<feature type="transmembrane region" description="Helical" evidence="6">
    <location>
        <begin position="271"/>
        <end position="291"/>
    </location>
</feature>
<feature type="transmembrane region" description="Helical" evidence="6">
    <location>
        <begin position="302"/>
        <end position="322"/>
    </location>
</feature>
<feature type="transmembrane region" description="Helical" evidence="6">
    <location>
        <begin position="328"/>
        <end position="348"/>
    </location>
</feature>
<feature type="transmembrane region" description="Helical" evidence="6">
    <location>
        <begin position="352"/>
        <end position="372"/>
    </location>
</feature>
<feature type="transmembrane region" description="Helical" evidence="6">
    <location>
        <begin position="377"/>
        <end position="397"/>
    </location>
</feature>
<feature type="topological domain" description="Cytoplasmic" evidence="6 20">
    <location>
        <begin position="398"/>
        <end position="765"/>
    </location>
</feature>
<feature type="transmembrane region" description="Helical" evidence="6">
    <location>
        <begin position="766"/>
        <end position="786"/>
    </location>
</feature>
<feature type="transmembrane region" description="Helical" evidence="6">
    <location>
        <begin position="792"/>
        <end position="812"/>
    </location>
</feature>
<feature type="transmembrane region" description="Helical" evidence="6">
    <location>
        <begin position="839"/>
        <end position="859"/>
    </location>
</feature>
<feature type="transmembrane region" description="Helical" evidence="6">
    <location>
        <begin position="908"/>
        <end position="928"/>
    </location>
</feature>
<feature type="transmembrane region" description="Helical" evidence="6">
    <location>
        <begin position="930"/>
        <end position="950"/>
    </location>
</feature>
<feature type="transmembrane region" description="Helical" evidence="6">
    <location>
        <begin position="988"/>
        <end position="1008"/>
    </location>
</feature>
<feature type="topological domain" description="Cytoplasmic" evidence="6 20">
    <location>
        <begin position="1009"/>
        <end position="1265"/>
    </location>
</feature>
<feature type="domain" description="Guanylate cyclase 1" evidence="7">
    <location>
        <begin position="472"/>
        <end position="599"/>
    </location>
</feature>
<feature type="domain" description="Guanylate cyclase 2" evidence="7">
    <location>
        <begin position="1075"/>
        <end position="1214"/>
    </location>
</feature>
<feature type="region of interest" description="Disordered" evidence="8">
    <location>
        <begin position="1"/>
        <end position="205"/>
    </location>
</feature>
<feature type="compositionally biased region" description="Basic and acidic residues" evidence="8">
    <location>
        <begin position="18"/>
        <end position="32"/>
    </location>
</feature>
<feature type="compositionally biased region" description="Low complexity" evidence="8">
    <location>
        <begin position="57"/>
        <end position="67"/>
    </location>
</feature>
<feature type="compositionally biased region" description="Basic and acidic residues" evidence="8">
    <location>
        <begin position="68"/>
        <end position="79"/>
    </location>
</feature>
<feature type="compositionally biased region" description="Gly residues" evidence="8">
    <location>
        <begin position="139"/>
        <end position="158"/>
    </location>
</feature>
<feature type="compositionally biased region" description="Basic and acidic residues" evidence="8">
    <location>
        <begin position="164"/>
        <end position="184"/>
    </location>
</feature>
<feature type="binding site" evidence="21 22 23 24">
    <location>
        <begin position="477"/>
        <end position="482"/>
    </location>
    <ligand>
        <name>ATP</name>
        <dbReference type="ChEBI" id="CHEBI:30616"/>
    </ligand>
</feature>
<feature type="binding site" evidence="9 25 26 27 28 30 34">
    <location>
        <position position="477"/>
    </location>
    <ligand>
        <name>Mg(2+)</name>
        <dbReference type="ChEBI" id="CHEBI:18420"/>
        <label>1</label>
        <note>catalytic</note>
    </ligand>
</feature>
<feature type="binding site" evidence="21">
    <location>
        <position position="477"/>
    </location>
    <ligand>
        <name>Mg(2+)</name>
        <dbReference type="ChEBI" id="CHEBI:18420"/>
        <label>2</label>
        <note>catalytic</note>
    </ligand>
</feature>
<feature type="binding site" evidence="21">
    <location>
        <position position="478"/>
    </location>
    <ligand>
        <name>Mg(2+)</name>
        <dbReference type="ChEBI" id="CHEBI:18420"/>
        <label>2</label>
        <note>catalytic</note>
    </ligand>
</feature>
<feature type="binding site" evidence="21 22 23 24">
    <location>
        <begin position="519"/>
        <end position="521"/>
    </location>
    <ligand>
        <name>ATP</name>
        <dbReference type="ChEBI" id="CHEBI:30616"/>
    </ligand>
</feature>
<feature type="binding site" evidence="9 25 26 27 28 30 34">
    <location>
        <position position="521"/>
    </location>
    <ligand>
        <name>Mg(2+)</name>
        <dbReference type="ChEBI" id="CHEBI:18420"/>
        <label>1</label>
        <note>catalytic</note>
    </ligand>
</feature>
<feature type="binding site" evidence="21">
    <location>
        <position position="521"/>
    </location>
    <ligand>
        <name>Mg(2+)</name>
        <dbReference type="ChEBI" id="CHEBI:18420"/>
        <label>2</label>
        <note>catalytic</note>
    </ligand>
</feature>
<feature type="binding site" evidence="21 22 23 24">
    <location>
        <position position="565"/>
    </location>
    <ligand>
        <name>ATP</name>
        <dbReference type="ChEBI" id="CHEBI:30616"/>
    </ligand>
</feature>
<feature type="binding site" evidence="3">
    <location>
        <position position="1127"/>
    </location>
    <ligand>
        <name>ATP</name>
        <dbReference type="ChEBI" id="CHEBI:30616"/>
    </ligand>
</feature>
<feature type="binding site" evidence="3">
    <location>
        <begin position="1201"/>
        <end position="1203"/>
    </location>
    <ligand>
        <name>ATP</name>
        <dbReference type="ChEBI" id="CHEBI:30616"/>
    </ligand>
</feature>
<feature type="binding site" evidence="3">
    <location>
        <begin position="1208"/>
        <end position="1212"/>
    </location>
    <ligand>
        <name>ATP</name>
        <dbReference type="ChEBI" id="CHEBI:30616"/>
    </ligand>
</feature>
<feature type="binding site" evidence="3">
    <location>
        <position position="1248"/>
    </location>
    <ligand>
        <name>ATP</name>
        <dbReference type="ChEBI" id="CHEBI:30616"/>
    </ligand>
</feature>
<feature type="modified residue" description="Omega-N-methylarginine" evidence="4">
    <location>
        <position position="16"/>
    </location>
</feature>
<feature type="modified residue" description="Phosphoserine" evidence="4">
    <location>
        <position position="113"/>
    </location>
</feature>
<feature type="modified residue" description="Phosphoserine" evidence="4">
    <location>
        <position position="168"/>
    </location>
</feature>
<feature type="modified residue" description="Phosphoserine" evidence="1">
    <location>
        <position position="669"/>
    </location>
</feature>
<feature type="modified residue" description="Phosphoserine" evidence="5">
    <location>
        <position position="757"/>
    </location>
</feature>
<feature type="modified residue" description="Phosphothreonine" evidence="5">
    <location>
        <position position="1015"/>
    </location>
</feature>
<feature type="glycosylation site" description="N-linked (GlcNAc...) asparagine" evidence="6">
    <location>
        <position position="873"/>
    </location>
</feature>
<feature type="glycosylation site" description="N-linked (GlcNAc...) asparagine" evidence="6">
    <location>
        <position position="890"/>
    </location>
</feature>
<feature type="glycosylation site" description="N-linked (GlcNAc...) asparagine" evidence="6">
    <location>
        <position position="976"/>
    </location>
</feature>
<feature type="splice variant" id="VSP_000242" description="In isoform 2." evidence="19">
    <original>KEEKAMIAKMNRQRTNSIGHNPPHW</original>
    <variation>VRRGGGGPRPGGADSPGWWGASAGP</variation>
    <location>
        <begin position="653"/>
        <end position="677"/>
    </location>
</feature>
<feature type="splice variant" id="VSP_000243" description="In isoform 2." evidence="19">
    <location>
        <begin position="678"/>
        <end position="1265"/>
    </location>
</feature>
<feature type="mutagenesis site" description="Almost abolishes enzyme activity. Abolishes enzyme activity; when associated with A-521 or N-521." evidence="9">
    <original>D</original>
    <variation>A</variation>
    <variation>N</variation>
    <location>
        <position position="477"/>
    </location>
</feature>
<feature type="mutagenesis site" description="Does not affect inhibition by G(i) G alpha protein GNAI1." evidence="18">
    <original>Q</original>
    <variation>E</variation>
    <variation>A</variation>
    <location>
        <position position="487"/>
    </location>
</feature>
<feature type="mutagenesis site" description="Decreased inhibition by G(i) G alpha protein GNAI1." evidence="18">
    <original>E</original>
    <variation>A</variation>
    <location>
        <position position="492"/>
    </location>
</feature>
<feature type="mutagenesis site" description="Decreased inhibition by G(i) G alpha protein GNAI1." evidence="18">
    <original>M</original>
    <variation>A</variation>
    <location>
        <position position="495"/>
    </location>
</feature>
<feature type="mutagenesis site" description="Decreased inhibition by G(i) G alpha protein GNAI1." evidence="18">
    <original>T</original>
    <variation>A</variation>
    <location>
        <position position="496"/>
    </location>
</feature>
<feature type="mutagenesis site" description="Increased inhibition by G(i) G alpha protein GNAI1." evidence="18">
    <original>E</original>
    <variation>A</variation>
    <location>
        <position position="499"/>
    </location>
</feature>
<feature type="mutagenesis site" description="Almost abolishes enzyme activity. Abolishes enzyme activity; when associated with A-396 or N-396." evidence="9">
    <original>D</original>
    <variation>A</variation>
    <variation>N</variation>
    <location>
        <position position="521"/>
    </location>
</feature>
<feature type="strand" evidence="37">
    <location>
        <begin position="464"/>
        <end position="479"/>
    </location>
</feature>
<feature type="helix" evidence="37">
    <location>
        <begin position="481"/>
        <end position="487"/>
    </location>
</feature>
<feature type="helix" evidence="37">
    <location>
        <begin position="490"/>
        <end position="511"/>
    </location>
</feature>
<feature type="strand" evidence="37">
    <location>
        <begin position="514"/>
        <end position="519"/>
    </location>
</feature>
<feature type="strand" evidence="37">
    <location>
        <begin position="522"/>
        <end position="527"/>
    </location>
</feature>
<feature type="helix" evidence="37">
    <location>
        <begin position="536"/>
        <end position="558"/>
    </location>
</feature>
<feature type="strand" evidence="37">
    <location>
        <begin position="563"/>
        <end position="577"/>
    </location>
</feature>
<feature type="strand" evidence="37">
    <location>
        <begin position="579"/>
        <end position="582"/>
    </location>
</feature>
<feature type="strand" evidence="37">
    <location>
        <begin position="586"/>
        <end position="589"/>
    </location>
</feature>
<feature type="helix" evidence="37">
    <location>
        <begin position="590"/>
        <end position="600"/>
    </location>
</feature>
<feature type="strand" evidence="38">
    <location>
        <begin position="603"/>
        <end position="605"/>
    </location>
</feature>
<feature type="strand" evidence="37">
    <location>
        <begin position="606"/>
        <end position="609"/>
    </location>
</feature>
<feature type="turn" evidence="37">
    <location>
        <begin position="612"/>
        <end position="619"/>
    </location>
</feature>
<feature type="strand" evidence="37">
    <location>
        <begin position="623"/>
        <end position="625"/>
    </location>
</feature>
<feature type="helix" evidence="37">
    <location>
        <begin position="628"/>
        <end position="630"/>
    </location>
</feature>
<feature type="helix" evidence="37">
    <location>
        <begin position="633"/>
        <end position="637"/>
    </location>
</feature>
<feature type="strand" evidence="37">
    <location>
        <begin position="643"/>
        <end position="645"/>
    </location>
</feature>
<dbReference type="EC" id="4.6.1.1" evidence="9 10 11 12 13 14 16"/>
<dbReference type="EMBL" id="M88649">
    <property type="protein sequence ID" value="AAC32726.1"/>
    <property type="molecule type" value="mRNA"/>
</dbReference>
<dbReference type="EMBL" id="M97886">
    <property type="protein sequence ID" value="AAA30827.1"/>
    <property type="status" value="ALT_SEQ"/>
    <property type="molecule type" value="mRNA"/>
</dbReference>
<dbReference type="PIR" id="A42904">
    <property type="entry name" value="A42904"/>
</dbReference>
<dbReference type="PIR" id="A45195">
    <property type="entry name" value="A45195"/>
</dbReference>
<dbReference type="RefSeq" id="NP_001161932.1">
    <molecule id="P30803-1"/>
    <property type="nucleotide sequence ID" value="NM_001168460.1"/>
</dbReference>
<dbReference type="PDB" id="1AZS">
    <property type="method" value="X-ray"/>
    <property type="resolution" value="2.30 A"/>
    <property type="chains" value="A=442-656"/>
</dbReference>
<dbReference type="PDB" id="1CJK">
    <property type="method" value="X-ray"/>
    <property type="resolution" value="3.00 A"/>
    <property type="chains" value="A=445-661"/>
</dbReference>
<dbReference type="PDB" id="1CJT">
    <property type="method" value="X-ray"/>
    <property type="resolution" value="2.80 A"/>
    <property type="chains" value="A=445-661"/>
</dbReference>
<dbReference type="PDB" id="1CJU">
    <property type="method" value="X-ray"/>
    <property type="resolution" value="2.80 A"/>
    <property type="chains" value="A=445-661"/>
</dbReference>
<dbReference type="PDB" id="1CJV">
    <property type="method" value="X-ray"/>
    <property type="resolution" value="3.00 A"/>
    <property type="chains" value="A=445-661"/>
</dbReference>
<dbReference type="PDB" id="1CS4">
    <property type="method" value="X-ray"/>
    <property type="resolution" value="2.50 A"/>
    <property type="chains" value="A=442-661"/>
</dbReference>
<dbReference type="PDB" id="1CUL">
    <property type="method" value="X-ray"/>
    <property type="resolution" value="2.40 A"/>
    <property type="chains" value="A=445-661"/>
</dbReference>
<dbReference type="PDB" id="1TL7">
    <property type="method" value="X-ray"/>
    <property type="resolution" value="2.80 A"/>
    <property type="chains" value="A=445-661"/>
</dbReference>
<dbReference type="PDB" id="1U0H">
    <property type="method" value="X-ray"/>
    <property type="resolution" value="2.90 A"/>
    <property type="chains" value="A=442-661"/>
</dbReference>
<dbReference type="PDB" id="2GVD">
    <property type="method" value="X-ray"/>
    <property type="resolution" value="2.90 A"/>
    <property type="chains" value="A=444-661"/>
</dbReference>
<dbReference type="PDB" id="2GVZ">
    <property type="method" value="X-ray"/>
    <property type="resolution" value="3.27 A"/>
    <property type="chains" value="A=444-661"/>
</dbReference>
<dbReference type="PDB" id="3C14">
    <property type="method" value="X-ray"/>
    <property type="resolution" value="2.68 A"/>
    <property type="chains" value="A=444-661"/>
</dbReference>
<dbReference type="PDB" id="3C15">
    <property type="method" value="X-ray"/>
    <property type="resolution" value="2.78 A"/>
    <property type="chains" value="A=444-661"/>
</dbReference>
<dbReference type="PDB" id="3C16">
    <property type="method" value="X-ray"/>
    <property type="resolution" value="2.87 A"/>
    <property type="chains" value="A=444-661"/>
</dbReference>
<dbReference type="PDB" id="3G82">
    <property type="method" value="X-ray"/>
    <property type="resolution" value="3.11 A"/>
    <property type="chains" value="A=444-661"/>
</dbReference>
<dbReference type="PDB" id="3MAA">
    <property type="method" value="X-ray"/>
    <property type="resolution" value="3.00 A"/>
    <property type="chains" value="A=444-661"/>
</dbReference>
<dbReference type="PDBsum" id="1AZS"/>
<dbReference type="PDBsum" id="1CJK"/>
<dbReference type="PDBsum" id="1CJT"/>
<dbReference type="PDBsum" id="1CJU"/>
<dbReference type="PDBsum" id="1CJV"/>
<dbReference type="PDBsum" id="1CS4"/>
<dbReference type="PDBsum" id="1CUL"/>
<dbReference type="PDBsum" id="1TL7"/>
<dbReference type="PDBsum" id="1U0H"/>
<dbReference type="PDBsum" id="2GVD"/>
<dbReference type="PDBsum" id="2GVZ"/>
<dbReference type="PDBsum" id="3C14"/>
<dbReference type="PDBsum" id="3C15"/>
<dbReference type="PDBsum" id="3C16"/>
<dbReference type="PDBsum" id="3G82"/>
<dbReference type="PDBsum" id="3MAA"/>
<dbReference type="SMR" id="P30803"/>
<dbReference type="DIP" id="DIP-179N"/>
<dbReference type="FunCoup" id="P30803">
    <property type="interactions" value="229"/>
</dbReference>
<dbReference type="IntAct" id="P30803">
    <property type="interactions" value="1"/>
</dbReference>
<dbReference type="STRING" id="9615.ENSCAFP00000017783"/>
<dbReference type="GlyCosmos" id="P30803">
    <property type="glycosylation" value="3 sites, No reported glycans"/>
</dbReference>
<dbReference type="SwissPalm" id="P30803"/>
<dbReference type="PaxDb" id="9612-ENSCAFP00000017783"/>
<dbReference type="GeneID" id="403859"/>
<dbReference type="KEGG" id="cfa:403859"/>
<dbReference type="CTD" id="111"/>
<dbReference type="eggNOG" id="KOG3619">
    <property type="taxonomic scope" value="Eukaryota"/>
</dbReference>
<dbReference type="InParanoid" id="P30803"/>
<dbReference type="OrthoDB" id="10261550at2759"/>
<dbReference type="EvolutionaryTrace" id="P30803"/>
<dbReference type="Proteomes" id="UP000002254">
    <property type="component" value="Unplaced"/>
</dbReference>
<dbReference type="Proteomes" id="UP000694429">
    <property type="component" value="Unplaced"/>
</dbReference>
<dbReference type="Proteomes" id="UP000694542">
    <property type="component" value="Unplaced"/>
</dbReference>
<dbReference type="Proteomes" id="UP000805418">
    <property type="component" value="Unplaced"/>
</dbReference>
<dbReference type="GO" id="GO:0005929">
    <property type="term" value="C:cilium"/>
    <property type="evidence" value="ECO:0000250"/>
    <property type="project" value="UniProtKB"/>
</dbReference>
<dbReference type="GO" id="GO:0016020">
    <property type="term" value="C:membrane"/>
    <property type="evidence" value="ECO:0000250"/>
    <property type="project" value="UniProtKB"/>
</dbReference>
<dbReference type="GO" id="GO:0005886">
    <property type="term" value="C:plasma membrane"/>
    <property type="evidence" value="ECO:0000318"/>
    <property type="project" value="GO_Central"/>
</dbReference>
<dbReference type="GO" id="GO:0004016">
    <property type="term" value="F:adenylate cyclase activity"/>
    <property type="evidence" value="ECO:0000314"/>
    <property type="project" value="UniProtKB"/>
</dbReference>
<dbReference type="GO" id="GO:0005524">
    <property type="term" value="F:ATP binding"/>
    <property type="evidence" value="ECO:0007669"/>
    <property type="project" value="UniProtKB-KW"/>
</dbReference>
<dbReference type="GO" id="GO:0046872">
    <property type="term" value="F:metal ion binding"/>
    <property type="evidence" value="ECO:0007669"/>
    <property type="project" value="UniProtKB-KW"/>
</dbReference>
<dbReference type="GO" id="GO:0007189">
    <property type="term" value="P:adenylate cyclase-activating G protein-coupled receptor signaling pathway"/>
    <property type="evidence" value="ECO:0000250"/>
    <property type="project" value="UniProtKB"/>
</dbReference>
<dbReference type="GO" id="GO:0006171">
    <property type="term" value="P:cAMP biosynthetic process"/>
    <property type="evidence" value="ECO:0000314"/>
    <property type="project" value="UniProtKB"/>
</dbReference>
<dbReference type="GO" id="GO:1904322">
    <property type="term" value="P:cellular response to forskolin"/>
    <property type="evidence" value="ECO:0000250"/>
    <property type="project" value="UniProtKB"/>
</dbReference>
<dbReference type="GO" id="GO:0035556">
    <property type="term" value="P:intracellular signal transduction"/>
    <property type="evidence" value="ECO:0007669"/>
    <property type="project" value="InterPro"/>
</dbReference>
<dbReference type="GO" id="GO:0007204">
    <property type="term" value="P:positive regulation of cytosolic calcium ion concentration"/>
    <property type="evidence" value="ECO:0000250"/>
    <property type="project" value="UniProtKB"/>
</dbReference>
<dbReference type="GO" id="GO:0061178">
    <property type="term" value="P:regulation of insulin secretion involved in cellular response to glucose stimulus"/>
    <property type="evidence" value="ECO:0000250"/>
    <property type="project" value="UniProtKB"/>
</dbReference>
<dbReference type="CDD" id="cd07302">
    <property type="entry name" value="CHD"/>
    <property type="match status" value="1"/>
</dbReference>
<dbReference type="CDD" id="cd07556">
    <property type="entry name" value="Nucleotidyl_cyc_III"/>
    <property type="match status" value="1"/>
</dbReference>
<dbReference type="FunFam" id="3.30.70.1230:FF:000001">
    <property type="entry name" value="Adenylate cyclase"/>
    <property type="match status" value="1"/>
</dbReference>
<dbReference type="FunFam" id="3.30.70.1230:FF:000002">
    <property type="entry name" value="Adenylate cyclase"/>
    <property type="match status" value="1"/>
</dbReference>
<dbReference type="Gene3D" id="3.30.70.1230">
    <property type="entry name" value="Nucleotide cyclase"/>
    <property type="match status" value="2"/>
</dbReference>
<dbReference type="InterPro" id="IPR001054">
    <property type="entry name" value="A/G_cyclase"/>
</dbReference>
<dbReference type="InterPro" id="IPR018297">
    <property type="entry name" value="A/G_cyclase_CS"/>
</dbReference>
<dbReference type="InterPro" id="IPR032628">
    <property type="entry name" value="AC_N"/>
</dbReference>
<dbReference type="InterPro" id="IPR009398">
    <property type="entry name" value="Adcy_conserved_dom"/>
</dbReference>
<dbReference type="InterPro" id="IPR029787">
    <property type="entry name" value="Nucleotide_cyclase"/>
</dbReference>
<dbReference type="PANTHER" id="PTHR45627">
    <property type="entry name" value="ADENYLATE CYCLASE TYPE 1"/>
    <property type="match status" value="1"/>
</dbReference>
<dbReference type="PANTHER" id="PTHR45627:SF7">
    <property type="entry name" value="ADENYLATE CYCLASE TYPE 5"/>
    <property type="match status" value="1"/>
</dbReference>
<dbReference type="Pfam" id="PF16214">
    <property type="entry name" value="AC_N"/>
    <property type="match status" value="1"/>
</dbReference>
<dbReference type="Pfam" id="PF06327">
    <property type="entry name" value="Adcy_cons_dom"/>
    <property type="match status" value="1"/>
</dbReference>
<dbReference type="Pfam" id="PF00211">
    <property type="entry name" value="Guanylate_cyc"/>
    <property type="match status" value="2"/>
</dbReference>
<dbReference type="SMART" id="SM00044">
    <property type="entry name" value="CYCc"/>
    <property type="match status" value="2"/>
</dbReference>
<dbReference type="SUPFAM" id="SSF55073">
    <property type="entry name" value="Nucleotide cyclase"/>
    <property type="match status" value="2"/>
</dbReference>
<dbReference type="PROSITE" id="PS00452">
    <property type="entry name" value="GUANYLATE_CYCLASE_1"/>
    <property type="match status" value="2"/>
</dbReference>
<dbReference type="PROSITE" id="PS50125">
    <property type="entry name" value="GUANYLATE_CYCLASE_2"/>
    <property type="match status" value="2"/>
</dbReference>
<organism>
    <name type="scientific">Canis lupus familiaris</name>
    <name type="common">Dog</name>
    <name type="synonym">Canis familiaris</name>
    <dbReference type="NCBI Taxonomy" id="9615"/>
    <lineage>
        <taxon>Eukaryota</taxon>
        <taxon>Metazoa</taxon>
        <taxon>Chordata</taxon>
        <taxon>Craniata</taxon>
        <taxon>Vertebrata</taxon>
        <taxon>Euteleostomi</taxon>
        <taxon>Mammalia</taxon>
        <taxon>Eutheria</taxon>
        <taxon>Laurasiatheria</taxon>
        <taxon>Carnivora</taxon>
        <taxon>Caniformia</taxon>
        <taxon>Canidae</taxon>
        <taxon>Canis</taxon>
    </lineage>
</organism>